<sequence>MIKEPEFREYDPKKLEEKVEKFWSENEIYRKVKELRKDGPKYYFLDGPPYVSGAIHLGTAWNKIIKDMIIRFRTMQGYNVWRQPGYDMHGLPIEVKVEQALGLKTKKEIEEKIGVENFIKKCKEFALNNLKIMTEQFKMLGIWMDWDNPYMTIKNEYIESAWFTLKRAWEKGLLEKDKRVLHWCPRCETALAEHEVRGEYKLRKDPSIYVKFPVEGKENEYLLIWTTTPWTLPANLAVSAHPDYDYVKVKVEFNGREEYWILAKALVDKVLGEIGVKGEVVEEFKGRELEGLRYVHILMDEYPRQKEFKEKYEWAHRVILADFVTLEEGTGLVHTAPGHGEEDFEVGQKYGLPVYSPLDDQGKYTEGKWKGIYVKEADPKIIEHLREKGYLVKAGEIEHKYPHCWRCKTPLIFRATDQWFLKISKVKDKIIKENDEKVTWYPDWVKIRFDNGVRDSGDWVISRQRYWGIPLPIWQSEDGEIYVVGSWRELVELAVAIEVNGERIELPESYEEKLKVIEEKLGPEDLHRPYVDAFIIKVNGKDMRRVKDVVDVWFDSGIASWASLGYPRNKELFEKLWPADFIVEGEDQVTKWFYSQQAASIVAFDTVPYRRVAMHGYVLDEKGDKMSKSLGNIIRPEEVVERAGRDTFRFYMLWATNPWENLKFSWKGVEQVRRMLNILWNVYVLASTYMSLDNFDPRKLNPDELPFREEDKWILSRVNSLISEVENGIESFYLTKATRALYNFVVEDLSRWYVRLIRKRLWVEGEDPDKLAAYYTLWKVFDVLLRLLAPFTPYIAEEIYQNLIRPFTNVESVHMLDWPKVDEKAIDEELEREMEFIRRIVEAGSAARQRAKIKLRYPVRRIIIETEDETVKKAVERLNRILRDQLNAKEVKVGRVERELTIKPNFAKLGPEFKGDAKIIAKWINENGRELYEKGELTVEIDGKTFHLTREHIIVEEKLPDFFVSEEFEGGRVFVDKTLTRELIAEGLAREFVRRIQEMRKRLDLDVNDRIIVTIETTDENVELLKENLDYIMRETRADKIVFGKAKGYVVEWPEVQAKIGIEKVEE</sequence>
<comment type="function">
    <text evidence="1">Catalyzes the attachment of isoleucine to tRNA(Ile). As IleRS can inadvertently accommodate and process structurally similar amino acids such as valine, to avoid such errors it has two additional distinct tRNA(Ile)-dependent editing activities. One activity is designated as 'pretransfer' editing and involves the hydrolysis of activated Val-AMP. The other activity is designated 'posttransfer' editing and involves deacylation of mischarged Val-tRNA(Ile).</text>
</comment>
<comment type="catalytic activity">
    <reaction evidence="1">
        <text>tRNA(Ile) + L-isoleucine + ATP = L-isoleucyl-tRNA(Ile) + AMP + diphosphate</text>
        <dbReference type="Rhea" id="RHEA:11060"/>
        <dbReference type="Rhea" id="RHEA-COMP:9666"/>
        <dbReference type="Rhea" id="RHEA-COMP:9695"/>
        <dbReference type="ChEBI" id="CHEBI:30616"/>
        <dbReference type="ChEBI" id="CHEBI:33019"/>
        <dbReference type="ChEBI" id="CHEBI:58045"/>
        <dbReference type="ChEBI" id="CHEBI:78442"/>
        <dbReference type="ChEBI" id="CHEBI:78528"/>
        <dbReference type="ChEBI" id="CHEBI:456215"/>
        <dbReference type="EC" id="6.1.1.5"/>
    </reaction>
</comment>
<comment type="cofactor">
    <cofactor evidence="1">
        <name>Zn(2+)</name>
        <dbReference type="ChEBI" id="CHEBI:29105"/>
    </cofactor>
</comment>
<comment type="subunit">
    <text evidence="1">Monomer.</text>
</comment>
<comment type="subcellular location">
    <subcellularLocation>
        <location evidence="1">Cytoplasm</location>
    </subcellularLocation>
</comment>
<comment type="domain">
    <text evidence="1">IleRS has two distinct active sites: one for aminoacylation and one for editing. The misactivated valine is translocated from the active site to the editing site, which sterically excludes the correctly activated isoleucine. The single editing site contains two valyl binding pockets, one specific for each substrate (Val-AMP or Val-tRNA(Ile)).</text>
</comment>
<comment type="similarity">
    <text evidence="1">Belongs to the class-I aminoacyl-tRNA synthetase family. IleS type 2 subfamily.</text>
</comment>
<reference key="1">
    <citation type="journal article" date="2003" name="Mol. Microbiol.">
        <title>An integrated analysis of the genome of the hyperthermophilic archaeon Pyrococcus abyssi.</title>
        <authorList>
            <person name="Cohen G.N."/>
            <person name="Barbe V."/>
            <person name="Flament D."/>
            <person name="Galperin M."/>
            <person name="Heilig R."/>
            <person name="Lecompte O."/>
            <person name="Poch O."/>
            <person name="Prieur D."/>
            <person name="Querellou J."/>
            <person name="Ripp R."/>
            <person name="Thierry J.-C."/>
            <person name="Van der Oost J."/>
            <person name="Weissenbach J."/>
            <person name="Zivanovic Y."/>
            <person name="Forterre P."/>
        </authorList>
    </citation>
    <scope>NUCLEOTIDE SEQUENCE [LARGE SCALE GENOMIC DNA]</scope>
    <source>
        <strain>GE5 / Orsay</strain>
    </source>
</reference>
<reference key="2">
    <citation type="journal article" date="2012" name="Curr. Microbiol.">
        <title>Re-annotation of two hyperthermophilic archaea Pyrococcus abyssi GE5 and Pyrococcus furiosus DSM 3638.</title>
        <authorList>
            <person name="Gao J."/>
            <person name="Wang J."/>
        </authorList>
    </citation>
    <scope>GENOME REANNOTATION</scope>
    <source>
        <strain>GE5 / Orsay</strain>
    </source>
</reference>
<evidence type="ECO:0000255" key="1">
    <source>
        <dbReference type="HAMAP-Rule" id="MF_02003"/>
    </source>
</evidence>
<accession>Q9V072</accession>
<accession>G8ZI86</accession>
<feature type="chain" id="PRO_0000098588" description="Isoleucine--tRNA ligase">
    <location>
        <begin position="1"/>
        <end position="1067"/>
    </location>
</feature>
<feature type="short sequence motif" description="'HIGH' region">
    <location>
        <begin position="49"/>
        <end position="59"/>
    </location>
</feature>
<feature type="short sequence motif" description="'KMSKS' region">
    <location>
        <begin position="625"/>
        <end position="629"/>
    </location>
</feature>
<feature type="binding site" evidence="1">
    <location>
        <position position="628"/>
    </location>
    <ligand>
        <name>ATP</name>
        <dbReference type="ChEBI" id="CHEBI:30616"/>
    </ligand>
</feature>
<dbReference type="EC" id="6.1.1.5" evidence="1"/>
<dbReference type="EMBL" id="AJ248285">
    <property type="protein sequence ID" value="CAB49833.1"/>
    <property type="molecule type" value="Genomic_DNA"/>
</dbReference>
<dbReference type="EMBL" id="HE613800">
    <property type="protein sequence ID" value="CCE70327.1"/>
    <property type="molecule type" value="Genomic_DNA"/>
</dbReference>
<dbReference type="PIR" id="H75139">
    <property type="entry name" value="H75139"/>
</dbReference>
<dbReference type="RefSeq" id="WP_010868042.1">
    <property type="nucleotide sequence ID" value="NC_000868.1"/>
</dbReference>
<dbReference type="SMR" id="Q9V072"/>
<dbReference type="STRING" id="272844.PAB0616"/>
<dbReference type="KEGG" id="pab:PAB0616"/>
<dbReference type="PATRIC" id="fig|272844.11.peg.973"/>
<dbReference type="eggNOG" id="arCOG00807">
    <property type="taxonomic scope" value="Archaea"/>
</dbReference>
<dbReference type="HOGENOM" id="CLU_001493_1_1_2"/>
<dbReference type="OrthoDB" id="30823at2157"/>
<dbReference type="PhylomeDB" id="Q9V072"/>
<dbReference type="Proteomes" id="UP000000810">
    <property type="component" value="Chromosome"/>
</dbReference>
<dbReference type="Proteomes" id="UP000009139">
    <property type="component" value="Chromosome"/>
</dbReference>
<dbReference type="GO" id="GO:0005737">
    <property type="term" value="C:cytoplasm"/>
    <property type="evidence" value="ECO:0007669"/>
    <property type="project" value="UniProtKB-SubCell"/>
</dbReference>
<dbReference type="GO" id="GO:0002161">
    <property type="term" value="F:aminoacyl-tRNA deacylase activity"/>
    <property type="evidence" value="ECO:0007669"/>
    <property type="project" value="InterPro"/>
</dbReference>
<dbReference type="GO" id="GO:0005524">
    <property type="term" value="F:ATP binding"/>
    <property type="evidence" value="ECO:0007669"/>
    <property type="project" value="UniProtKB-UniRule"/>
</dbReference>
<dbReference type="GO" id="GO:0004822">
    <property type="term" value="F:isoleucine-tRNA ligase activity"/>
    <property type="evidence" value="ECO:0007669"/>
    <property type="project" value="UniProtKB-UniRule"/>
</dbReference>
<dbReference type="GO" id="GO:0000049">
    <property type="term" value="F:tRNA binding"/>
    <property type="evidence" value="ECO:0007669"/>
    <property type="project" value="InterPro"/>
</dbReference>
<dbReference type="GO" id="GO:0008270">
    <property type="term" value="F:zinc ion binding"/>
    <property type="evidence" value="ECO:0007669"/>
    <property type="project" value="UniProtKB-UniRule"/>
</dbReference>
<dbReference type="GO" id="GO:0006428">
    <property type="term" value="P:isoleucyl-tRNA aminoacylation"/>
    <property type="evidence" value="ECO:0007669"/>
    <property type="project" value="UniProtKB-UniRule"/>
</dbReference>
<dbReference type="CDD" id="cd07961">
    <property type="entry name" value="Anticodon_Ia_Ile_ABEc"/>
    <property type="match status" value="1"/>
</dbReference>
<dbReference type="CDD" id="cd00818">
    <property type="entry name" value="IleRS_core"/>
    <property type="match status" value="1"/>
</dbReference>
<dbReference type="FunFam" id="3.40.50.620:FF:000325">
    <property type="entry name" value="Isoleucine--tRNA ligase"/>
    <property type="match status" value="1"/>
</dbReference>
<dbReference type="FunFam" id="3.40.50.620:FF:000421">
    <property type="entry name" value="Isoleucine--tRNA ligase"/>
    <property type="match status" value="1"/>
</dbReference>
<dbReference type="FunFam" id="1.10.730.10:FF:000033">
    <property type="entry name" value="Valine--tRNA ligase"/>
    <property type="match status" value="1"/>
</dbReference>
<dbReference type="Gene3D" id="3.30.720.200">
    <property type="match status" value="1"/>
</dbReference>
<dbReference type="Gene3D" id="3.40.50.620">
    <property type="entry name" value="HUPs"/>
    <property type="match status" value="2"/>
</dbReference>
<dbReference type="Gene3D" id="1.10.730.10">
    <property type="entry name" value="Isoleucyl-tRNA Synthetase, Domain 1"/>
    <property type="match status" value="1"/>
</dbReference>
<dbReference type="Gene3D" id="3.90.740.10">
    <property type="entry name" value="Valyl/Leucyl/Isoleucyl-tRNA synthetase, editing domain"/>
    <property type="match status" value="1"/>
</dbReference>
<dbReference type="HAMAP" id="MF_02003">
    <property type="entry name" value="Ile_tRNA_synth_type2"/>
    <property type="match status" value="1"/>
</dbReference>
<dbReference type="InterPro" id="IPR001412">
    <property type="entry name" value="aa-tRNA-synth_I_CS"/>
</dbReference>
<dbReference type="InterPro" id="IPR002300">
    <property type="entry name" value="aa-tRNA-synth_Ia"/>
</dbReference>
<dbReference type="InterPro" id="IPR033709">
    <property type="entry name" value="Anticodon_Ile_ABEc"/>
</dbReference>
<dbReference type="InterPro" id="IPR002301">
    <property type="entry name" value="Ile-tRNA-ligase"/>
</dbReference>
<dbReference type="InterPro" id="IPR023586">
    <property type="entry name" value="Ile-tRNA-ligase_type2"/>
</dbReference>
<dbReference type="InterPro" id="IPR013155">
    <property type="entry name" value="M/V/L/I-tRNA-synth_anticd-bd"/>
</dbReference>
<dbReference type="InterPro" id="IPR014729">
    <property type="entry name" value="Rossmann-like_a/b/a_fold"/>
</dbReference>
<dbReference type="InterPro" id="IPR009080">
    <property type="entry name" value="tRNAsynth_Ia_anticodon-bd"/>
</dbReference>
<dbReference type="InterPro" id="IPR009008">
    <property type="entry name" value="Val/Leu/Ile-tRNA-synth_edit"/>
</dbReference>
<dbReference type="NCBIfam" id="TIGR00392">
    <property type="entry name" value="ileS"/>
    <property type="match status" value="1"/>
</dbReference>
<dbReference type="PANTHER" id="PTHR42780:SF1">
    <property type="entry name" value="ISOLEUCINE--TRNA LIGASE, CYTOPLASMIC"/>
    <property type="match status" value="1"/>
</dbReference>
<dbReference type="PANTHER" id="PTHR42780">
    <property type="entry name" value="SOLEUCYL-TRNA SYNTHETASE"/>
    <property type="match status" value="1"/>
</dbReference>
<dbReference type="Pfam" id="PF08264">
    <property type="entry name" value="Anticodon_1"/>
    <property type="match status" value="1"/>
</dbReference>
<dbReference type="Pfam" id="PF19302">
    <property type="entry name" value="DUF5915"/>
    <property type="match status" value="1"/>
</dbReference>
<dbReference type="Pfam" id="PF00133">
    <property type="entry name" value="tRNA-synt_1"/>
    <property type="match status" value="1"/>
</dbReference>
<dbReference type="PRINTS" id="PR00984">
    <property type="entry name" value="TRNASYNTHILE"/>
</dbReference>
<dbReference type="SUPFAM" id="SSF47323">
    <property type="entry name" value="Anticodon-binding domain of a subclass of class I aminoacyl-tRNA synthetases"/>
    <property type="match status" value="2"/>
</dbReference>
<dbReference type="SUPFAM" id="SSF52374">
    <property type="entry name" value="Nucleotidylyl transferase"/>
    <property type="match status" value="1"/>
</dbReference>
<dbReference type="SUPFAM" id="SSF50677">
    <property type="entry name" value="ValRS/IleRS/LeuRS editing domain"/>
    <property type="match status" value="1"/>
</dbReference>
<dbReference type="PROSITE" id="PS00178">
    <property type="entry name" value="AA_TRNA_LIGASE_I"/>
    <property type="match status" value="1"/>
</dbReference>
<gene>
    <name evidence="1" type="primary">ileS</name>
    <name type="ordered locus">PYRAB09190</name>
    <name type="ORF">PAB0616</name>
</gene>
<name>SYI_PYRAB</name>
<proteinExistence type="inferred from homology"/>
<organism>
    <name type="scientific">Pyrococcus abyssi (strain GE5 / Orsay)</name>
    <dbReference type="NCBI Taxonomy" id="272844"/>
    <lineage>
        <taxon>Archaea</taxon>
        <taxon>Methanobacteriati</taxon>
        <taxon>Methanobacteriota</taxon>
        <taxon>Thermococci</taxon>
        <taxon>Thermococcales</taxon>
        <taxon>Thermococcaceae</taxon>
        <taxon>Pyrococcus</taxon>
    </lineage>
</organism>
<keyword id="KW-0030">Aminoacyl-tRNA synthetase</keyword>
<keyword id="KW-0067">ATP-binding</keyword>
<keyword id="KW-0963">Cytoplasm</keyword>
<keyword id="KW-0436">Ligase</keyword>
<keyword id="KW-0479">Metal-binding</keyword>
<keyword id="KW-0547">Nucleotide-binding</keyword>
<keyword id="KW-0648">Protein biosynthesis</keyword>
<keyword id="KW-0862">Zinc</keyword>
<protein>
    <recommendedName>
        <fullName evidence="1">Isoleucine--tRNA ligase</fullName>
        <ecNumber evidence="1">6.1.1.5</ecNumber>
    </recommendedName>
    <alternativeName>
        <fullName evidence="1">Isoleucyl-tRNA synthetase</fullName>
        <shortName evidence="1">IleRS</shortName>
    </alternativeName>
</protein>